<evidence type="ECO:0000250" key="1"/>
<evidence type="ECO:0000255" key="2"/>
<evidence type="ECO:0000305" key="3"/>
<organism>
    <name type="scientific">Lactuca sativa</name>
    <name type="common">Garden lettuce</name>
    <dbReference type="NCBI Taxonomy" id="4236"/>
    <lineage>
        <taxon>Eukaryota</taxon>
        <taxon>Viridiplantae</taxon>
        <taxon>Streptophyta</taxon>
        <taxon>Embryophyta</taxon>
        <taxon>Tracheophyta</taxon>
        <taxon>Spermatophyta</taxon>
        <taxon>Magnoliopsida</taxon>
        <taxon>eudicotyledons</taxon>
        <taxon>Gunneridae</taxon>
        <taxon>Pentapetalae</taxon>
        <taxon>asterids</taxon>
        <taxon>campanulids</taxon>
        <taxon>Asterales</taxon>
        <taxon>Asteraceae</taxon>
        <taxon>Cichorioideae</taxon>
        <taxon>Cichorieae</taxon>
        <taxon>Lactucinae</taxon>
        <taxon>Lactuca</taxon>
    </lineage>
</organism>
<feature type="chain" id="PRO_0000417772" description="Casparian strip membrane protein 1">
    <location>
        <begin position="1"/>
        <end position="179"/>
    </location>
</feature>
<feature type="topological domain" description="Cytoplasmic" evidence="2">
    <location>
        <begin position="1"/>
        <end position="17"/>
    </location>
</feature>
<feature type="transmembrane region" description="Helical" evidence="2">
    <location>
        <begin position="18"/>
        <end position="38"/>
    </location>
</feature>
<feature type="topological domain" description="Extracellular" evidence="2">
    <location>
        <begin position="39"/>
        <end position="67"/>
    </location>
</feature>
<feature type="transmembrane region" description="Helical" evidence="2">
    <location>
        <begin position="68"/>
        <end position="88"/>
    </location>
</feature>
<feature type="topological domain" description="Cytoplasmic" evidence="2">
    <location>
        <begin position="89"/>
        <end position="100"/>
    </location>
</feature>
<feature type="transmembrane region" description="Helical" evidence="2">
    <location>
        <begin position="101"/>
        <end position="121"/>
    </location>
</feature>
<feature type="topological domain" description="Extracellular" evidence="2">
    <location>
        <begin position="122"/>
        <end position="154"/>
    </location>
</feature>
<feature type="transmembrane region" description="Helical" evidence="2">
    <location>
        <begin position="155"/>
        <end position="175"/>
    </location>
</feature>
<feature type="topological domain" description="Cytoplasmic" evidence="2">
    <location>
        <begin position="176"/>
        <end position="179"/>
    </location>
</feature>
<feature type="glycosylation site" description="N-linked (GlcNAc...) asparagine" evidence="2">
    <location>
        <position position="44"/>
    </location>
</feature>
<dbReference type="EMBL" id="DY977434">
    <property type="status" value="NOT_ANNOTATED_CDS"/>
    <property type="molecule type" value="mRNA"/>
</dbReference>
<dbReference type="SMR" id="P0DI59"/>
<dbReference type="GO" id="GO:0005886">
    <property type="term" value="C:plasma membrane"/>
    <property type="evidence" value="ECO:0007669"/>
    <property type="project" value="UniProtKB-SubCell"/>
</dbReference>
<dbReference type="GO" id="GO:0071555">
    <property type="term" value="P:cell wall organization"/>
    <property type="evidence" value="ECO:0007669"/>
    <property type="project" value="UniProtKB-KW"/>
</dbReference>
<dbReference type="InterPro" id="IPR006459">
    <property type="entry name" value="CASP/CASPL"/>
</dbReference>
<dbReference type="InterPro" id="IPR006702">
    <property type="entry name" value="CASP_dom"/>
</dbReference>
<dbReference type="InterPro" id="IPR044173">
    <property type="entry name" value="CASPL"/>
</dbReference>
<dbReference type="NCBIfam" id="TIGR01569">
    <property type="entry name" value="A_tha_TIGR01569"/>
    <property type="match status" value="1"/>
</dbReference>
<dbReference type="PANTHER" id="PTHR36488:SF12">
    <property type="entry name" value="CASP-LIKE PROTEIN"/>
    <property type="match status" value="1"/>
</dbReference>
<dbReference type="PANTHER" id="PTHR36488">
    <property type="entry name" value="CASP-LIKE PROTEIN 1U1"/>
    <property type="match status" value="1"/>
</dbReference>
<dbReference type="Pfam" id="PF04535">
    <property type="entry name" value="CASP_dom"/>
    <property type="match status" value="1"/>
</dbReference>
<keyword id="KW-1003">Cell membrane</keyword>
<keyword id="KW-0961">Cell wall biogenesis/degradation</keyword>
<keyword id="KW-0325">Glycoprotein</keyword>
<keyword id="KW-0472">Membrane</keyword>
<keyword id="KW-0812">Transmembrane</keyword>
<keyword id="KW-1133">Transmembrane helix</keyword>
<sequence length="179" mass="19116">MKAGPLQLGVVPPANRAIAILDFFLRPIAIVGTLASAIAMATTNQTLPFFSQFIRFRAKFNDLPSFTFFVVASSIVSAYLILSLGFSILHIAKSNLVNSRVLLLLLDTAAMGLLMAGSAAATAIVQLAHKGNNKVNWFAICQQYNSFCKRVSGSLIGSYAGVVVLILLILLSGVALSRR</sequence>
<comment type="function">
    <text evidence="1">Regulates membrane-cell wall junctions and localized cell wall deposition. Required for establishment of the Casparian strip membrane domain (CSD) and the subsequent formation of Casparian strips, a cell wall modification of the root endodermis that determines an apoplastic barrier between the intraorganismal apoplasm and the extraorganismal apoplasm and prevents lateral diffusion (By similarity).</text>
</comment>
<comment type="subunit">
    <text evidence="1">Homodimer and heterodimers.</text>
</comment>
<comment type="subcellular location">
    <subcellularLocation>
        <location evidence="1">Cell membrane</location>
        <topology evidence="1">Multi-pass membrane protein</topology>
    </subcellularLocation>
    <text evidence="1">Very restricted localization following a belt shape within the plasma membrane which coincides with the position of the Casparian strip membrane domain in the root endodermis.</text>
</comment>
<comment type="similarity">
    <text evidence="3">Belongs to the Casparian strip membrane proteins (CASP) family.</text>
</comment>
<reference key="1">
    <citation type="submission" date="2009-05" db="EMBL/GenBank/DDBJ databases">
        <title>Lettuce (Lactuca sativa) ESTs (set 3) from the compositae genome project http://compgenomics.ucdavis.edu/.</title>
        <authorList>
            <person name="Michelmore R.W."/>
            <person name="Knapp S."/>
            <person name="Rieseberg L."/>
            <person name="Bradford K."/>
            <person name="Kesseli R."/>
            <person name="Boore J."/>
            <person name="Kozik A."/>
            <person name="Matvienko M."/>
            <person name="Lavelle D."/>
            <person name="McHale L."/>
        </authorList>
    </citation>
    <scope>NUCLEOTIDE SEQUENCE [LARGE SCALE MRNA]</scope>
    <source>
        <strain>cv. Salinas</strain>
    </source>
</reference>
<reference key="2">
    <citation type="journal article" date="2014" name="Plant Physiol.">
        <title>Functional and evolutionary analysis of the CASPARIAN STRIP MEMBRANE DOMAIN PROTEIN family.</title>
        <authorList>
            <person name="Roppolo D."/>
            <person name="Boeckmann B."/>
            <person name="Pfister A."/>
            <person name="Boutet E."/>
            <person name="Rubio M.C."/>
            <person name="Denervaud-Tendon V."/>
            <person name="Vermeer J.E."/>
            <person name="Gheyselinck J."/>
            <person name="Xenarios I."/>
            <person name="Geldner N."/>
        </authorList>
    </citation>
    <scope>GENE FAMILY</scope>
    <scope>NOMENCLATURE</scope>
</reference>
<protein>
    <recommendedName>
        <fullName>Casparian strip membrane protein 1</fullName>
        <shortName>LsCASP1</shortName>
    </recommendedName>
</protein>
<proteinExistence type="evidence at transcript level"/>
<accession>P0DI59</accession>
<name>CASP1_LACSA</name>